<comment type="function">
    <text evidence="2 7">Oxidizes the CoA esters of the bile acid intermediates di- and tri-hydroxycholestanoic acids (PubMed:27884763). Capable of oxidizing short as well as long chain 2-methyl branched fatty acids (By similarity).</text>
</comment>
<comment type="catalytic activity">
    <reaction evidence="7">
        <text>(25R)-3alpha,7alpha,12alpha-trihydroxy-5beta-cholestan-26-oyl-CoA + A + H2O = (24R,25R)-3alpha,7alpha,12alpha,24-tetrahydroxy-5beta-cholestan-26-oyl-CoA + AH2</text>
        <dbReference type="Rhea" id="RHEA:15733"/>
        <dbReference type="ChEBI" id="CHEBI:13193"/>
        <dbReference type="ChEBI" id="CHEBI:15377"/>
        <dbReference type="ChEBI" id="CHEBI:17499"/>
        <dbReference type="ChEBI" id="CHEBI:58677"/>
        <dbReference type="ChEBI" id="CHEBI:59807"/>
        <dbReference type="EC" id="1.17.99.3"/>
    </reaction>
    <physiologicalReaction direction="left-to-right" evidence="11">
        <dbReference type="Rhea" id="RHEA:15734"/>
    </physiologicalReaction>
</comment>
<comment type="catalytic activity">
    <reaction evidence="1">
        <text>(25S)-3alpha,7alpha,12alpha-trihydroxy-5beta-cholestan-26-oyl-CoA + O2 = (24E)-3alpha,7alpha,12alpha-trihydroxy-5beta-cholest-24-en-26-oyl-CoA + H2O2</text>
        <dbReference type="Rhea" id="RHEA:46728"/>
        <dbReference type="ChEBI" id="CHEBI:15379"/>
        <dbReference type="ChEBI" id="CHEBI:16240"/>
        <dbReference type="ChEBI" id="CHEBI:59879"/>
        <dbReference type="ChEBI" id="CHEBI:77251"/>
    </reaction>
    <physiologicalReaction direction="left-to-right" evidence="1">
        <dbReference type="Rhea" id="RHEA:46729"/>
    </physiologicalReaction>
</comment>
<comment type="cofactor">
    <cofactor evidence="2">
        <name>FAD</name>
        <dbReference type="ChEBI" id="CHEBI:57692"/>
    </cofactor>
</comment>
<comment type="subunit">
    <text evidence="2">Homodimer.</text>
</comment>
<comment type="interaction">
    <interactant intactId="EBI-12026476">
        <id>Q99424</id>
    </interactant>
    <interactant intactId="EBI-1176455">
        <id>P63172</id>
        <label>DYNLT1</label>
    </interactant>
    <organismsDiffer>false</organismsDiffer>
    <experiments>3</experiments>
</comment>
<comment type="interaction">
    <interactant intactId="EBI-12026476">
        <id>Q99424</id>
    </interactant>
    <interactant intactId="EBI-1053857">
        <id>Q13033</id>
        <label>STRN3</label>
    </interactant>
    <organismsDiffer>false</organismsDiffer>
    <experiments>2</experiments>
</comment>
<comment type="subcellular location">
    <subcellularLocation>
        <location evidence="7 8">Peroxisome</location>
    </subcellularLocation>
</comment>
<comment type="tissue specificity">
    <text evidence="8">Present in all tissues tested: heart, brain, placenta, lung, liver, skeletal muscle, kidney and pancreas. Most abundant in heart, liver and kidney.</text>
</comment>
<comment type="disease" evidence="6 7">
    <disease id="DI-04924">
        <name>Congenital bile acid synthesis defect 6</name>
        <acronym>CBAS6</acronym>
        <description>An inborn error of bile acid synthesis characterized by abnormally increased liver enzymes, hypolipidemia and low cholesterol, vitamin D deficiency, elevated plasma and urinary levels of C27 intermediate bile acids 3alpha,7alpha-dihydroxy-5beta-cholestanoic acid (DHCA) and 3alpha,7alpha,12alpha-trihydroxy-5beta-cholestanoic acid (THCA). Serum levels of phytanic and pristanic acids are normal. Clinical features include liver fibrosis, mild ataxia, delayed development, and cognitive impairment. Liver histology shows many thin fibrous septa, swollen hepatocytes, glycogenated nuclei, and focal acinar transformation, consistent with hepatocellular injury and regeneration, without signs of obvious cholestasis, cholate stasis, or steatosis. CBAS6 transmission pattern is consistent with autosomal recessive inheritance.</description>
        <dbReference type="MIM" id="617308"/>
    </disease>
    <text>The disease is caused by variants affecting the gene represented in this entry.</text>
</comment>
<comment type="similarity">
    <text evidence="10">Belongs to the acyl-CoA oxidase family.</text>
</comment>
<reference key="1">
    <citation type="journal article" date="1996" name="Proc. Natl. Acad. Sci. U.S.A.">
        <title>Molecular characterization of the human peroxisomal branched-chain acyl-CoA oxidase: cDNA cloning, chromosomal assignment, tissue distribution, and evidence for the absence of the protein in Zellweger's syndrome.</title>
        <authorList>
            <person name="Baumgart E."/>
            <person name="Vanhooren J.C.T."/>
            <person name="Fransen M."/>
            <person name="Marynen P."/>
            <person name="Puype M."/>
            <person name="Vandekerckhove J."/>
            <person name="Leunissen J.A.M."/>
            <person name="Fahimi H.D."/>
            <person name="Mannaerts G.P."/>
            <person name="Van Veldhoven P.P."/>
        </authorList>
    </citation>
    <scope>NUCLEOTIDE SEQUENCE [MRNA]</scope>
    <scope>PROTEIN SEQUENCE OF 8-14; 271-282; 337-346; 450-468 AND 656-664</scope>
    <scope>SUBCELLULAR LOCATION</scope>
    <scope>TISSUE SPECIFICITY</scope>
    <source>
        <tissue>Liver</tissue>
    </source>
</reference>
<reference key="2">
    <citation type="submission" date="1997-09" db="EMBL/GenBank/DDBJ databases">
        <title>Genomic sequence of peroxisomal human branched chain acyl-CoA oxidase.</title>
        <authorList>
            <person name="Fournier B."/>
            <person name="Baumgart E."/>
            <person name="Fahimi D."/>
            <person name="Mannaerts G.P."/>
            <person name="Van Veldhoven P.P."/>
        </authorList>
    </citation>
    <scope>NUCLEOTIDE SEQUENCE [GENOMIC DNA]</scope>
</reference>
<reference key="3">
    <citation type="journal article" date="2004" name="Nat. Genet.">
        <title>Complete sequencing and characterization of 21,243 full-length human cDNAs.</title>
        <authorList>
            <person name="Ota T."/>
            <person name="Suzuki Y."/>
            <person name="Nishikawa T."/>
            <person name="Otsuki T."/>
            <person name="Sugiyama T."/>
            <person name="Irie R."/>
            <person name="Wakamatsu A."/>
            <person name="Hayashi K."/>
            <person name="Sato H."/>
            <person name="Nagai K."/>
            <person name="Kimura K."/>
            <person name="Makita H."/>
            <person name="Sekine M."/>
            <person name="Obayashi M."/>
            <person name="Nishi T."/>
            <person name="Shibahara T."/>
            <person name="Tanaka T."/>
            <person name="Ishii S."/>
            <person name="Yamamoto J."/>
            <person name="Saito K."/>
            <person name="Kawai Y."/>
            <person name="Isono Y."/>
            <person name="Nakamura Y."/>
            <person name="Nagahari K."/>
            <person name="Murakami K."/>
            <person name="Yasuda T."/>
            <person name="Iwayanagi T."/>
            <person name="Wagatsuma M."/>
            <person name="Shiratori A."/>
            <person name="Sudo H."/>
            <person name="Hosoiri T."/>
            <person name="Kaku Y."/>
            <person name="Kodaira H."/>
            <person name="Kondo H."/>
            <person name="Sugawara M."/>
            <person name="Takahashi M."/>
            <person name="Kanda K."/>
            <person name="Yokoi T."/>
            <person name="Furuya T."/>
            <person name="Kikkawa E."/>
            <person name="Omura Y."/>
            <person name="Abe K."/>
            <person name="Kamihara K."/>
            <person name="Katsuta N."/>
            <person name="Sato K."/>
            <person name="Tanikawa M."/>
            <person name="Yamazaki M."/>
            <person name="Ninomiya K."/>
            <person name="Ishibashi T."/>
            <person name="Yamashita H."/>
            <person name="Murakawa K."/>
            <person name="Fujimori K."/>
            <person name="Tanai H."/>
            <person name="Kimata M."/>
            <person name="Watanabe M."/>
            <person name="Hiraoka S."/>
            <person name="Chiba Y."/>
            <person name="Ishida S."/>
            <person name="Ono Y."/>
            <person name="Takiguchi S."/>
            <person name="Watanabe S."/>
            <person name="Yosida M."/>
            <person name="Hotuta T."/>
            <person name="Kusano J."/>
            <person name="Kanehori K."/>
            <person name="Takahashi-Fujii A."/>
            <person name="Hara H."/>
            <person name="Tanase T.-O."/>
            <person name="Nomura Y."/>
            <person name="Togiya S."/>
            <person name="Komai F."/>
            <person name="Hara R."/>
            <person name="Takeuchi K."/>
            <person name="Arita M."/>
            <person name="Imose N."/>
            <person name="Musashino K."/>
            <person name="Yuuki H."/>
            <person name="Oshima A."/>
            <person name="Sasaki N."/>
            <person name="Aotsuka S."/>
            <person name="Yoshikawa Y."/>
            <person name="Matsunawa H."/>
            <person name="Ichihara T."/>
            <person name="Shiohata N."/>
            <person name="Sano S."/>
            <person name="Moriya S."/>
            <person name="Momiyama H."/>
            <person name="Satoh N."/>
            <person name="Takami S."/>
            <person name="Terashima Y."/>
            <person name="Suzuki O."/>
            <person name="Nakagawa S."/>
            <person name="Senoh A."/>
            <person name="Mizoguchi H."/>
            <person name="Goto Y."/>
            <person name="Shimizu F."/>
            <person name="Wakebe H."/>
            <person name="Hishigaki H."/>
            <person name="Watanabe T."/>
            <person name="Sugiyama A."/>
            <person name="Takemoto M."/>
            <person name="Kawakami B."/>
            <person name="Yamazaki M."/>
            <person name="Watanabe K."/>
            <person name="Kumagai A."/>
            <person name="Itakura S."/>
            <person name="Fukuzumi Y."/>
            <person name="Fujimori Y."/>
            <person name="Komiyama M."/>
            <person name="Tashiro H."/>
            <person name="Tanigami A."/>
            <person name="Fujiwara T."/>
            <person name="Ono T."/>
            <person name="Yamada K."/>
            <person name="Fujii Y."/>
            <person name="Ozaki K."/>
            <person name="Hirao M."/>
            <person name="Ohmori Y."/>
            <person name="Kawabata A."/>
            <person name="Hikiji T."/>
            <person name="Kobatake N."/>
            <person name="Inagaki H."/>
            <person name="Ikema Y."/>
            <person name="Okamoto S."/>
            <person name="Okitani R."/>
            <person name="Kawakami T."/>
            <person name="Noguchi S."/>
            <person name="Itoh T."/>
            <person name="Shigeta K."/>
            <person name="Senba T."/>
            <person name="Matsumura K."/>
            <person name="Nakajima Y."/>
            <person name="Mizuno T."/>
            <person name="Morinaga M."/>
            <person name="Sasaki M."/>
            <person name="Togashi T."/>
            <person name="Oyama M."/>
            <person name="Hata H."/>
            <person name="Watanabe M."/>
            <person name="Komatsu T."/>
            <person name="Mizushima-Sugano J."/>
            <person name="Satoh T."/>
            <person name="Shirai Y."/>
            <person name="Takahashi Y."/>
            <person name="Nakagawa K."/>
            <person name="Okumura K."/>
            <person name="Nagase T."/>
            <person name="Nomura N."/>
            <person name="Kikuchi H."/>
            <person name="Masuho Y."/>
            <person name="Yamashita R."/>
            <person name="Nakai K."/>
            <person name="Yada T."/>
            <person name="Nakamura Y."/>
            <person name="Ohara O."/>
            <person name="Isogai T."/>
            <person name="Sugano S."/>
        </authorList>
    </citation>
    <scope>NUCLEOTIDE SEQUENCE [LARGE SCALE MRNA]</scope>
    <source>
        <tissue>Kidney</tissue>
    </source>
</reference>
<reference key="4">
    <citation type="journal article" date="2006" name="Nature">
        <title>The DNA sequence, annotation and analysis of human chromosome 3.</title>
        <authorList>
            <person name="Muzny D.M."/>
            <person name="Scherer S.E."/>
            <person name="Kaul R."/>
            <person name="Wang J."/>
            <person name="Yu J."/>
            <person name="Sudbrak R."/>
            <person name="Buhay C.J."/>
            <person name="Chen R."/>
            <person name="Cree A."/>
            <person name="Ding Y."/>
            <person name="Dugan-Rocha S."/>
            <person name="Gill R."/>
            <person name="Gunaratne P."/>
            <person name="Harris R.A."/>
            <person name="Hawes A.C."/>
            <person name="Hernandez J."/>
            <person name="Hodgson A.V."/>
            <person name="Hume J."/>
            <person name="Jackson A."/>
            <person name="Khan Z.M."/>
            <person name="Kovar-Smith C."/>
            <person name="Lewis L.R."/>
            <person name="Lozado R.J."/>
            <person name="Metzker M.L."/>
            <person name="Milosavljevic A."/>
            <person name="Miner G.R."/>
            <person name="Morgan M.B."/>
            <person name="Nazareth L.V."/>
            <person name="Scott G."/>
            <person name="Sodergren E."/>
            <person name="Song X.-Z."/>
            <person name="Steffen D."/>
            <person name="Wei S."/>
            <person name="Wheeler D.A."/>
            <person name="Wright M.W."/>
            <person name="Worley K.C."/>
            <person name="Yuan Y."/>
            <person name="Zhang Z."/>
            <person name="Adams C.Q."/>
            <person name="Ansari-Lari M.A."/>
            <person name="Ayele M."/>
            <person name="Brown M.J."/>
            <person name="Chen G."/>
            <person name="Chen Z."/>
            <person name="Clendenning J."/>
            <person name="Clerc-Blankenburg K.P."/>
            <person name="Chen R."/>
            <person name="Chen Z."/>
            <person name="Davis C."/>
            <person name="Delgado O."/>
            <person name="Dinh H.H."/>
            <person name="Dong W."/>
            <person name="Draper H."/>
            <person name="Ernst S."/>
            <person name="Fu G."/>
            <person name="Gonzalez-Garay M.L."/>
            <person name="Garcia D.K."/>
            <person name="Gillett W."/>
            <person name="Gu J."/>
            <person name="Hao B."/>
            <person name="Haugen E."/>
            <person name="Havlak P."/>
            <person name="He X."/>
            <person name="Hennig S."/>
            <person name="Hu S."/>
            <person name="Huang W."/>
            <person name="Jackson L.R."/>
            <person name="Jacob L.S."/>
            <person name="Kelly S.H."/>
            <person name="Kube M."/>
            <person name="Levy R."/>
            <person name="Li Z."/>
            <person name="Liu B."/>
            <person name="Liu J."/>
            <person name="Liu W."/>
            <person name="Lu J."/>
            <person name="Maheshwari M."/>
            <person name="Nguyen B.-V."/>
            <person name="Okwuonu G.O."/>
            <person name="Palmeiri A."/>
            <person name="Pasternak S."/>
            <person name="Perez L.M."/>
            <person name="Phelps K.A."/>
            <person name="Plopper F.J."/>
            <person name="Qiang B."/>
            <person name="Raymond C."/>
            <person name="Rodriguez R."/>
            <person name="Saenphimmachak C."/>
            <person name="Santibanez J."/>
            <person name="Shen H."/>
            <person name="Shen Y."/>
            <person name="Subramanian S."/>
            <person name="Tabor P.E."/>
            <person name="Verduzco D."/>
            <person name="Waldron L."/>
            <person name="Wang J."/>
            <person name="Wang J."/>
            <person name="Wang Q."/>
            <person name="Williams G.A."/>
            <person name="Wong G.K.-S."/>
            <person name="Yao Z."/>
            <person name="Zhang J."/>
            <person name="Zhang X."/>
            <person name="Zhao G."/>
            <person name="Zhou J."/>
            <person name="Zhou Y."/>
            <person name="Nelson D."/>
            <person name="Lehrach H."/>
            <person name="Reinhardt R."/>
            <person name="Naylor S.L."/>
            <person name="Yang H."/>
            <person name="Olson M."/>
            <person name="Weinstock G."/>
            <person name="Gibbs R.A."/>
        </authorList>
    </citation>
    <scope>NUCLEOTIDE SEQUENCE [LARGE SCALE GENOMIC DNA]</scope>
</reference>
<reference key="5">
    <citation type="submission" date="2005-07" db="EMBL/GenBank/DDBJ databases">
        <authorList>
            <person name="Mural R.J."/>
            <person name="Istrail S."/>
            <person name="Sutton G.G."/>
            <person name="Florea L."/>
            <person name="Halpern A.L."/>
            <person name="Mobarry C.M."/>
            <person name="Lippert R."/>
            <person name="Walenz B."/>
            <person name="Shatkay H."/>
            <person name="Dew I."/>
            <person name="Miller J.R."/>
            <person name="Flanigan M.J."/>
            <person name="Edwards N.J."/>
            <person name="Bolanos R."/>
            <person name="Fasulo D."/>
            <person name="Halldorsson B.V."/>
            <person name="Hannenhalli S."/>
            <person name="Turner R."/>
            <person name="Yooseph S."/>
            <person name="Lu F."/>
            <person name="Nusskern D.R."/>
            <person name="Shue B.C."/>
            <person name="Zheng X.H."/>
            <person name="Zhong F."/>
            <person name="Delcher A.L."/>
            <person name="Huson D.H."/>
            <person name="Kravitz S.A."/>
            <person name="Mouchard L."/>
            <person name="Reinert K."/>
            <person name="Remington K.A."/>
            <person name="Clark A.G."/>
            <person name="Waterman M.S."/>
            <person name="Eichler E.E."/>
            <person name="Adams M.D."/>
            <person name="Hunkapiller M.W."/>
            <person name="Myers E.W."/>
            <person name="Venter J.C."/>
        </authorList>
    </citation>
    <scope>NUCLEOTIDE SEQUENCE [LARGE SCALE GENOMIC DNA]</scope>
</reference>
<reference key="6">
    <citation type="journal article" date="2004" name="Genome Res.">
        <title>The status, quality, and expansion of the NIH full-length cDNA project: the Mammalian Gene Collection (MGC).</title>
        <authorList>
            <consortium name="The MGC Project Team"/>
        </authorList>
    </citation>
    <scope>NUCLEOTIDE SEQUENCE [LARGE SCALE MRNA]</scope>
    <source>
        <tissue>Colon</tissue>
    </source>
</reference>
<reference key="7">
    <citation type="journal article" date="2014" name="J. Proteomics">
        <title>An enzyme assisted RP-RPLC approach for in-depth analysis of human liver phosphoproteome.</title>
        <authorList>
            <person name="Bian Y."/>
            <person name="Song C."/>
            <person name="Cheng K."/>
            <person name="Dong M."/>
            <person name="Wang F."/>
            <person name="Huang J."/>
            <person name="Sun D."/>
            <person name="Wang L."/>
            <person name="Ye M."/>
            <person name="Zou H."/>
        </authorList>
    </citation>
    <scope>PHOSPHORYLATION [LARGE SCALE ANALYSIS] AT SER-9 AND THR-13</scope>
    <scope>IDENTIFICATION BY MASS SPECTROMETRY [LARGE SCALE ANALYSIS]</scope>
    <source>
        <tissue>Liver</tissue>
    </source>
</reference>
<reference key="8">
    <citation type="journal article" date="2016" name="Proc. Natl. Acad. Sci. U.S.A.">
        <title>ACOX2 deficiency: A disorder of bile acid synthesis with transaminase elevation, liver fibrosis, ataxia, and cognitive impairment.</title>
        <authorList>
            <person name="Vilarinho S."/>
            <person name="Sari S."/>
            <person name="Mazzacuva F."/>
            <person name="Bilguevar K."/>
            <person name="Esendagli-Yilmaz G."/>
            <person name="Jain D."/>
            <person name="Akyol G."/>
            <person name="Dalgic B."/>
            <person name="Guenel M."/>
            <person name="Clayton P.T."/>
            <person name="Lifton R.P."/>
        </authorList>
    </citation>
    <scope>INVOLVEMENT IN CBAS6</scope>
    <scope>VARIANT CBAS6 69-TYR--LEU-682 DEL</scope>
    <scope>CHARACTERIZATION OF VARIANT CBAS6 69-TYR--LEU-682 DEL</scope>
</reference>
<reference key="9">
    <citation type="journal article" date="2017" name="J. Hepatol.">
        <title>ACOX2 deficiency: An inborn error of bile acid synthesis identified in an adolescent with persistent hypertransaminasemia.</title>
        <authorList>
            <person name="Monte M.J."/>
            <person name="Alonso-Pena M."/>
            <person name="Briz O."/>
            <person name="Herraez E."/>
            <person name="Berasain C."/>
            <person name="Argemi J."/>
            <person name="Prieto J."/>
            <person name="Marin J.J."/>
        </authorList>
    </citation>
    <scope>FUNCTION</scope>
    <scope>CATALYTIC ACTIVITY</scope>
    <scope>SUBCELLULAR LOCATION</scope>
    <scope>INVOLVEMENT IN CBAS6</scope>
    <scope>VARIANT CBAS6 TRP-225</scope>
    <scope>CHARACTERIZATION OF VARIANT CBAS6 TRP-225</scope>
</reference>
<evidence type="ECO:0000250" key="1">
    <source>
        <dbReference type="UniProtKB" id="O02767"/>
    </source>
</evidence>
<evidence type="ECO:0000250" key="2">
    <source>
        <dbReference type="UniProtKB" id="P07872"/>
    </source>
</evidence>
<evidence type="ECO:0000250" key="3">
    <source>
        <dbReference type="UniProtKB" id="P97562"/>
    </source>
</evidence>
<evidence type="ECO:0000250" key="4">
    <source>
        <dbReference type="UniProtKB" id="Q9QXD1"/>
    </source>
</evidence>
<evidence type="ECO:0000255" key="5"/>
<evidence type="ECO:0000269" key="6">
    <source>
    </source>
</evidence>
<evidence type="ECO:0000269" key="7">
    <source>
    </source>
</evidence>
<evidence type="ECO:0000269" key="8">
    <source>
    </source>
</evidence>
<evidence type="ECO:0000303" key="9">
    <source>
    </source>
</evidence>
<evidence type="ECO:0000305" key="10"/>
<evidence type="ECO:0000305" key="11">
    <source>
    </source>
</evidence>
<evidence type="ECO:0000312" key="12">
    <source>
        <dbReference type="HGNC" id="HGNC:120"/>
    </source>
</evidence>
<evidence type="ECO:0007744" key="13">
    <source>
    </source>
</evidence>
<protein>
    <recommendedName>
        <fullName evidence="9">Peroxisomal acyl-coenzyme A oxidase 2</fullName>
        <ecNumber evidence="7">1.17.99.3</ecNumber>
    </recommendedName>
    <alternativeName>
        <fullName>3-alpha,7-alpha,12-alpha-trihydroxy-5-beta-cholestanoyl-CoA 24-hydroxylase</fullName>
    </alternativeName>
    <alternativeName>
        <fullName evidence="1">3-alpha,7-alpha,12-alpha-trihydroxy-5-beta-cholestanoyl-CoA oxidase</fullName>
    </alternativeName>
    <alternativeName>
        <fullName evidence="3">Trihydroxycoprostanoyl-CoA oxidase</fullName>
        <shortName evidence="1">THCA-CoA oxidase</shortName>
        <shortName>THCCox</shortName>
    </alternativeName>
</protein>
<gene>
    <name evidence="12" type="primary">ACOX2</name>
</gene>
<feature type="chain" id="PRO_0000204681" description="Peroxisomal acyl-coenzyme A oxidase 2">
    <location>
        <begin position="1"/>
        <end position="681"/>
    </location>
</feature>
<feature type="short sequence motif" description="Microbody targeting signal" evidence="5">
    <location>
        <begin position="679"/>
        <end position="681"/>
    </location>
</feature>
<feature type="modified residue" description="Phosphoserine" evidence="3">
    <location>
        <position position="3"/>
    </location>
</feature>
<feature type="modified residue" description="Phosphoserine" evidence="13">
    <location>
        <position position="9"/>
    </location>
</feature>
<feature type="modified residue" description="Phosphothreonine" evidence="13">
    <location>
        <position position="13"/>
    </location>
</feature>
<feature type="modified residue" description="N6-succinyllysine" evidence="4">
    <location>
        <position position="66"/>
    </location>
</feature>
<feature type="modified residue" description="N6-succinyllysine" evidence="4">
    <location>
        <position position="137"/>
    </location>
</feature>
<feature type="modified residue" description="N6-succinyllysine" evidence="4">
    <location>
        <position position="453"/>
    </location>
</feature>
<feature type="modified residue" description="N6-succinyllysine" evidence="4">
    <location>
        <position position="561"/>
    </location>
</feature>
<feature type="sequence variant" id="VAR_078764" description="In CBAS6; patient liver samples show absence of the protein; complete loss of fatty acid beta-oxidation activity." evidence="6">
    <location>
        <begin position="69"/>
        <end position="681"/>
    </location>
</feature>
<feature type="sequence variant" id="VAR_078765" description="In CBAS6; reduces fatty acid beta-oxidation activity; does not alter subcellular location; dbSNP:rs150832314." evidence="7">
    <original>R</original>
    <variation>W</variation>
    <location>
        <position position="225"/>
    </location>
</feature>
<accession>Q99424</accession>
<accession>A6NF16</accession>
<accession>B2R8U5</accession>
<sequence length="681" mass="76827">MGSPVHRVSLGDTWSRQMHPDIESERYMQSFDVERLTNILDGGAQNTALRRKVESIIHSYPEFSCKDNYFMTQNERYKAAMRRAFHIRLIARRLGWLEDGRELGYAYRALSGDVALNIHRVFVRALRSLGSEEQIAKWDPLCKNIQIIATYAQTELGHGTYLQGLETEATYDAATQEFVIHSPTLTATKWWPGDLGRSATHALVQAQLICSGARRGMHAFIVPIRSLQDHTPLPGIIIGDIGPKMDFDQTDNGFLQLNHVRVPRENMLSRFAQVLPDGTYVKLGTAQSNYLPMVVVRVELLSGEILPILQKACVIAMRYSVIRRQSRLRPSDPEAKVLDYQTQQQKLFPQLAISYAFHFLAVSLLEFFQHSYTAILNQDFSFLPELHALSTGMKAMMSEFCTQGAEMCRRACGGHGYSKLSGLPSLVTKLSASCTYEGENTVLYLQVARFLVKSYLQTQMSPGSTPQRSLSPSVAYLTAPDLARCPAQRAADFLCPELYTTAWAHVAVRLIKDSVQHLQTLTQSGADQHEAWNQTTVIHLQAAKVHCYYVTVKGFTEALEKLENEPAIQQVLKRLCDLHAIHGILTNSGDFLHDAFLSGAQVDMARTAYLDLLRLIRKDAILLTDAFDFTDQCLNSALGCYDGNVYERLFQWAQKSPTNTQENPAYEEYIRPLLQSWRSKL</sequence>
<name>ACOX2_HUMAN</name>
<proteinExistence type="evidence at protein level"/>
<organism>
    <name type="scientific">Homo sapiens</name>
    <name type="common">Human</name>
    <dbReference type="NCBI Taxonomy" id="9606"/>
    <lineage>
        <taxon>Eukaryota</taxon>
        <taxon>Metazoa</taxon>
        <taxon>Chordata</taxon>
        <taxon>Craniata</taxon>
        <taxon>Vertebrata</taxon>
        <taxon>Euteleostomi</taxon>
        <taxon>Mammalia</taxon>
        <taxon>Eutheria</taxon>
        <taxon>Euarchontoglires</taxon>
        <taxon>Primates</taxon>
        <taxon>Haplorrhini</taxon>
        <taxon>Catarrhini</taxon>
        <taxon>Hominidae</taxon>
        <taxon>Homo</taxon>
    </lineage>
</organism>
<dbReference type="EC" id="1.17.99.3" evidence="7"/>
<dbReference type="EMBL" id="X95190">
    <property type="protein sequence ID" value="CAA64489.1"/>
    <property type="molecule type" value="mRNA"/>
</dbReference>
<dbReference type="EMBL" id="AJ001541">
    <property type="protein sequence ID" value="CAB65596.1"/>
    <property type="molecule type" value="Genomic_DNA"/>
</dbReference>
<dbReference type="EMBL" id="AJ001542">
    <property type="protein sequence ID" value="CAB65596.1"/>
    <property type="status" value="JOINED"/>
    <property type="molecule type" value="Genomic_DNA"/>
</dbReference>
<dbReference type="EMBL" id="AJ001543">
    <property type="protein sequence ID" value="CAB65596.1"/>
    <property type="status" value="JOINED"/>
    <property type="molecule type" value="Genomic_DNA"/>
</dbReference>
<dbReference type="EMBL" id="AJ001544">
    <property type="protein sequence ID" value="CAB65596.1"/>
    <property type="status" value="JOINED"/>
    <property type="molecule type" value="Genomic_DNA"/>
</dbReference>
<dbReference type="EMBL" id="AJ001545">
    <property type="protein sequence ID" value="CAB65596.1"/>
    <property type="status" value="JOINED"/>
    <property type="molecule type" value="Genomic_DNA"/>
</dbReference>
<dbReference type="EMBL" id="AJ001546">
    <property type="protein sequence ID" value="CAB65596.1"/>
    <property type="status" value="JOINED"/>
    <property type="molecule type" value="Genomic_DNA"/>
</dbReference>
<dbReference type="EMBL" id="AJ001547">
    <property type="protein sequence ID" value="CAB65596.1"/>
    <property type="status" value="JOINED"/>
    <property type="molecule type" value="Genomic_DNA"/>
</dbReference>
<dbReference type="EMBL" id="AJ001548">
    <property type="protein sequence ID" value="CAB65596.1"/>
    <property type="status" value="JOINED"/>
    <property type="molecule type" value="Genomic_DNA"/>
</dbReference>
<dbReference type="EMBL" id="AK313512">
    <property type="protein sequence ID" value="BAG36292.1"/>
    <property type="molecule type" value="mRNA"/>
</dbReference>
<dbReference type="EMBL" id="AC116036">
    <property type="status" value="NOT_ANNOTATED_CDS"/>
    <property type="molecule type" value="Genomic_DNA"/>
</dbReference>
<dbReference type="EMBL" id="CH471055">
    <property type="protein sequence ID" value="EAW65375.1"/>
    <property type="molecule type" value="Genomic_DNA"/>
</dbReference>
<dbReference type="EMBL" id="BC047700">
    <property type="protein sequence ID" value="AAH47700.1"/>
    <property type="molecule type" value="mRNA"/>
</dbReference>
<dbReference type="CCDS" id="CCDS33775.1"/>
<dbReference type="RefSeq" id="NP_003491.1">
    <property type="nucleotide sequence ID" value="NM_003500.4"/>
</dbReference>
<dbReference type="RefSeq" id="XP_005265562.1">
    <property type="nucleotide sequence ID" value="XM_005265505.2"/>
</dbReference>
<dbReference type="RefSeq" id="XP_054204027.1">
    <property type="nucleotide sequence ID" value="XM_054348052.1"/>
</dbReference>
<dbReference type="SMR" id="Q99424"/>
<dbReference type="BioGRID" id="113906">
    <property type="interactions" value="6"/>
</dbReference>
<dbReference type="FunCoup" id="Q99424">
    <property type="interactions" value="461"/>
</dbReference>
<dbReference type="IntAct" id="Q99424">
    <property type="interactions" value="3"/>
</dbReference>
<dbReference type="STRING" id="9606.ENSP00000307697"/>
<dbReference type="GlyGen" id="Q99424">
    <property type="glycosylation" value="1 site, 1 O-linked glycan (1 site)"/>
</dbReference>
<dbReference type="iPTMnet" id="Q99424"/>
<dbReference type="PhosphoSitePlus" id="Q99424"/>
<dbReference type="SwissPalm" id="Q99424"/>
<dbReference type="BioMuta" id="ACOX2"/>
<dbReference type="DMDM" id="17366636"/>
<dbReference type="jPOST" id="Q99424"/>
<dbReference type="MassIVE" id="Q99424"/>
<dbReference type="PaxDb" id="9606-ENSP00000307697"/>
<dbReference type="PeptideAtlas" id="Q99424"/>
<dbReference type="ProteomicsDB" id="78260"/>
<dbReference type="Antibodypedia" id="31666">
    <property type="antibodies" value="317 antibodies from 32 providers"/>
</dbReference>
<dbReference type="DNASU" id="8309"/>
<dbReference type="Ensembl" id="ENST00000302819.10">
    <property type="protein sequence ID" value="ENSP00000307697.5"/>
    <property type="gene ID" value="ENSG00000168306.13"/>
</dbReference>
<dbReference type="GeneID" id="8309"/>
<dbReference type="KEGG" id="hsa:8309"/>
<dbReference type="MANE-Select" id="ENST00000302819.10">
    <property type="protein sequence ID" value="ENSP00000307697.5"/>
    <property type="RefSeq nucleotide sequence ID" value="NM_003500.4"/>
    <property type="RefSeq protein sequence ID" value="NP_003491.1"/>
</dbReference>
<dbReference type="UCSC" id="uc003dkl.4">
    <property type="organism name" value="human"/>
</dbReference>
<dbReference type="AGR" id="HGNC:120"/>
<dbReference type="CTD" id="8309"/>
<dbReference type="DisGeNET" id="8309"/>
<dbReference type="GeneCards" id="ACOX2"/>
<dbReference type="HGNC" id="HGNC:120">
    <property type="gene designation" value="ACOX2"/>
</dbReference>
<dbReference type="HPA" id="ENSG00000168306">
    <property type="expression patterns" value="Tissue enriched (liver)"/>
</dbReference>
<dbReference type="MalaCards" id="ACOX2"/>
<dbReference type="MIM" id="601641">
    <property type="type" value="gene"/>
</dbReference>
<dbReference type="MIM" id="617308">
    <property type="type" value="phenotype"/>
</dbReference>
<dbReference type="neXtProt" id="NX_Q99424"/>
<dbReference type="OpenTargets" id="ENSG00000168306"/>
<dbReference type="PharmGKB" id="PA24444"/>
<dbReference type="VEuPathDB" id="HostDB:ENSG00000168306"/>
<dbReference type="eggNOG" id="KOG0136">
    <property type="taxonomic scope" value="Eukaryota"/>
</dbReference>
<dbReference type="GeneTree" id="ENSGT00940000160985"/>
<dbReference type="HOGENOM" id="CLU_014629_3_1_1"/>
<dbReference type="InParanoid" id="Q99424"/>
<dbReference type="OMA" id="NHGVHCF"/>
<dbReference type="OrthoDB" id="538336at2759"/>
<dbReference type="PAN-GO" id="Q99424">
    <property type="GO annotations" value="8 GO annotations based on evolutionary models"/>
</dbReference>
<dbReference type="PhylomeDB" id="Q99424"/>
<dbReference type="TreeFam" id="TF300672"/>
<dbReference type="BioCyc" id="MetaCyc:HS09732-MONOMER"/>
<dbReference type="PathwayCommons" id="Q99424"/>
<dbReference type="Reactome" id="R-HSA-193368">
    <property type="pathway name" value="Synthesis of bile acids and bile salts via 7alpha-hydroxycholesterol"/>
</dbReference>
<dbReference type="Reactome" id="R-HSA-389887">
    <property type="pathway name" value="Beta-oxidation of pristanoyl-CoA"/>
</dbReference>
<dbReference type="Reactome" id="R-HSA-9033241">
    <property type="pathway name" value="Peroxisomal protein import"/>
</dbReference>
<dbReference type="SignaLink" id="Q99424"/>
<dbReference type="BioGRID-ORCS" id="8309">
    <property type="hits" value="7 hits in 1147 CRISPR screens"/>
</dbReference>
<dbReference type="ChiTaRS" id="ACOX2">
    <property type="organism name" value="human"/>
</dbReference>
<dbReference type="GenomeRNAi" id="8309"/>
<dbReference type="Pharos" id="Q99424">
    <property type="development level" value="Tbio"/>
</dbReference>
<dbReference type="PRO" id="PR:Q99424"/>
<dbReference type="Proteomes" id="UP000005640">
    <property type="component" value="Chromosome 3"/>
</dbReference>
<dbReference type="RNAct" id="Q99424">
    <property type="molecule type" value="protein"/>
</dbReference>
<dbReference type="Bgee" id="ENSG00000168306">
    <property type="expression patterns" value="Expressed in right lobe of liver and 136 other cell types or tissues"/>
</dbReference>
<dbReference type="ExpressionAtlas" id="Q99424">
    <property type="expression patterns" value="baseline and differential"/>
</dbReference>
<dbReference type="GO" id="GO:0005829">
    <property type="term" value="C:cytosol"/>
    <property type="evidence" value="ECO:0000314"/>
    <property type="project" value="HPA"/>
</dbReference>
<dbReference type="GO" id="GO:0043231">
    <property type="term" value="C:intracellular membrane-bounded organelle"/>
    <property type="evidence" value="ECO:0000314"/>
    <property type="project" value="HPA"/>
</dbReference>
<dbReference type="GO" id="GO:0005782">
    <property type="term" value="C:peroxisomal matrix"/>
    <property type="evidence" value="ECO:0000304"/>
    <property type="project" value="Reactome"/>
</dbReference>
<dbReference type="GO" id="GO:0005777">
    <property type="term" value="C:peroxisome"/>
    <property type="evidence" value="ECO:0000314"/>
    <property type="project" value="UniProtKB"/>
</dbReference>
<dbReference type="GO" id="GO:0033791">
    <property type="term" value="F:3alpha,7alpha,12alpha-trihydroxy-5beta-cholestanoyl-CoA 24-hydroxylase activity"/>
    <property type="evidence" value="ECO:0000314"/>
    <property type="project" value="UniProtKB"/>
</dbReference>
<dbReference type="GO" id="GO:0071949">
    <property type="term" value="F:FAD binding"/>
    <property type="evidence" value="ECO:0007669"/>
    <property type="project" value="InterPro"/>
</dbReference>
<dbReference type="GO" id="GO:0005504">
    <property type="term" value="F:fatty acid binding"/>
    <property type="evidence" value="ECO:0000318"/>
    <property type="project" value="GO_Central"/>
</dbReference>
<dbReference type="GO" id="GO:0050660">
    <property type="term" value="F:flavin adenine dinucleotide binding"/>
    <property type="evidence" value="ECO:0000250"/>
    <property type="project" value="UniProtKB"/>
</dbReference>
<dbReference type="GO" id="GO:0016401">
    <property type="term" value="F:palmitoyl-CoA oxidase activity"/>
    <property type="evidence" value="ECO:0000318"/>
    <property type="project" value="GO_Central"/>
</dbReference>
<dbReference type="GO" id="GO:0042803">
    <property type="term" value="F:protein homodimerization activity"/>
    <property type="evidence" value="ECO:0000250"/>
    <property type="project" value="UniProtKB"/>
</dbReference>
<dbReference type="GO" id="GO:0006699">
    <property type="term" value="P:bile acid biosynthetic process"/>
    <property type="evidence" value="ECO:0000314"/>
    <property type="project" value="UniProtKB"/>
</dbReference>
<dbReference type="GO" id="GO:0033540">
    <property type="term" value="P:fatty acid beta-oxidation using acyl-CoA oxidase"/>
    <property type="evidence" value="ECO:0000314"/>
    <property type="project" value="UniProtKB"/>
</dbReference>
<dbReference type="GO" id="GO:0000038">
    <property type="term" value="P:very long-chain fatty acid metabolic process"/>
    <property type="evidence" value="ECO:0000318"/>
    <property type="project" value="GO_Central"/>
</dbReference>
<dbReference type="FunFam" id="1.10.540.10:FF:000006">
    <property type="entry name" value="Acyl-coenzyme A oxidase"/>
    <property type="match status" value="1"/>
</dbReference>
<dbReference type="FunFam" id="1.20.140.10:FF:000005">
    <property type="entry name" value="Acyl-coenzyme A oxidase"/>
    <property type="match status" value="1"/>
</dbReference>
<dbReference type="FunFam" id="1.20.140.10:FF:000007">
    <property type="entry name" value="Acyl-coenzyme A oxidase"/>
    <property type="match status" value="1"/>
</dbReference>
<dbReference type="FunFam" id="2.40.110.10:FF:000003">
    <property type="entry name" value="Acyl-coenzyme A oxidase"/>
    <property type="match status" value="1"/>
</dbReference>
<dbReference type="Gene3D" id="1.10.540.10">
    <property type="entry name" value="Acyl-CoA dehydrogenase/oxidase, N-terminal domain"/>
    <property type="match status" value="1"/>
</dbReference>
<dbReference type="Gene3D" id="2.40.110.10">
    <property type="entry name" value="Butyryl-CoA Dehydrogenase, subunit A, domain 2"/>
    <property type="match status" value="1"/>
</dbReference>
<dbReference type="Gene3D" id="1.20.140.10">
    <property type="entry name" value="Butyryl-CoA Dehydrogenase, subunit A, domain 3"/>
    <property type="match status" value="2"/>
</dbReference>
<dbReference type="InterPro" id="IPR055060">
    <property type="entry name" value="ACOX_C_alpha1"/>
</dbReference>
<dbReference type="InterPro" id="IPR029320">
    <property type="entry name" value="Acyl-CoA_ox_N"/>
</dbReference>
<dbReference type="InterPro" id="IPR046373">
    <property type="entry name" value="Acyl-CoA_Oxase/DH_mid-dom_sf"/>
</dbReference>
<dbReference type="InterPro" id="IPR012258">
    <property type="entry name" value="Acyl-CoA_oxidase"/>
</dbReference>
<dbReference type="InterPro" id="IPR002655">
    <property type="entry name" value="Acyl-CoA_oxidase_C"/>
</dbReference>
<dbReference type="InterPro" id="IPR036250">
    <property type="entry name" value="AcylCo_DH-like_C"/>
</dbReference>
<dbReference type="InterPro" id="IPR037069">
    <property type="entry name" value="AcylCoA_DH/ox_N_sf"/>
</dbReference>
<dbReference type="InterPro" id="IPR009100">
    <property type="entry name" value="AcylCoA_DH/oxidase_NM_dom_sf"/>
</dbReference>
<dbReference type="PANTHER" id="PTHR10909">
    <property type="entry name" value="ELECTRON TRANSPORT OXIDOREDUCTASE"/>
    <property type="match status" value="1"/>
</dbReference>
<dbReference type="PANTHER" id="PTHR10909:SF344">
    <property type="entry name" value="PEROXISOMAL ACYL-COENZYME A OXIDASE 2"/>
    <property type="match status" value="1"/>
</dbReference>
<dbReference type="Pfam" id="PF01756">
    <property type="entry name" value="ACOX"/>
    <property type="match status" value="1"/>
</dbReference>
<dbReference type="Pfam" id="PF22924">
    <property type="entry name" value="ACOX_C_alpha1"/>
    <property type="match status" value="1"/>
</dbReference>
<dbReference type="Pfam" id="PF14749">
    <property type="entry name" value="Acyl-CoA_ox_N"/>
    <property type="match status" value="1"/>
</dbReference>
<dbReference type="PIRSF" id="PIRSF000168">
    <property type="entry name" value="Acyl-CoA_oxidase"/>
    <property type="match status" value="1"/>
</dbReference>
<dbReference type="SUPFAM" id="SSF47203">
    <property type="entry name" value="Acyl-CoA dehydrogenase C-terminal domain-like"/>
    <property type="match status" value="2"/>
</dbReference>
<dbReference type="SUPFAM" id="SSF56645">
    <property type="entry name" value="Acyl-CoA dehydrogenase NM domain-like"/>
    <property type="match status" value="1"/>
</dbReference>
<keyword id="KW-0903">Direct protein sequencing</keyword>
<keyword id="KW-0225">Disease variant</keyword>
<keyword id="KW-0274">FAD</keyword>
<keyword id="KW-0276">Fatty acid metabolism</keyword>
<keyword id="KW-0285">Flavoprotein</keyword>
<keyword id="KW-0443">Lipid metabolism</keyword>
<keyword id="KW-0560">Oxidoreductase</keyword>
<keyword id="KW-0576">Peroxisome</keyword>
<keyword id="KW-0597">Phosphoprotein</keyword>
<keyword id="KW-1267">Proteomics identification</keyword>
<keyword id="KW-1185">Reference proteome</keyword>